<comment type="function">
    <text evidence="1">Catalyzes the decarboxylation of four acetate groups of uroporphyrinogen-III to yield coproporphyrinogen-III.</text>
</comment>
<comment type="catalytic activity">
    <reaction evidence="1">
        <text>uroporphyrinogen III + 4 H(+) = coproporphyrinogen III + 4 CO2</text>
        <dbReference type="Rhea" id="RHEA:19865"/>
        <dbReference type="ChEBI" id="CHEBI:15378"/>
        <dbReference type="ChEBI" id="CHEBI:16526"/>
        <dbReference type="ChEBI" id="CHEBI:57308"/>
        <dbReference type="ChEBI" id="CHEBI:57309"/>
        <dbReference type="EC" id="4.1.1.37"/>
    </reaction>
</comment>
<comment type="pathway">
    <text evidence="1">Porphyrin-containing compound metabolism; protoporphyrin-IX biosynthesis; coproporphyrinogen-III from 5-aminolevulinate: step 4/4.</text>
</comment>
<comment type="subunit">
    <text evidence="1">Homodimer.</text>
</comment>
<comment type="subcellular location">
    <subcellularLocation>
        <location evidence="1">Cytoplasm</location>
    </subcellularLocation>
</comment>
<comment type="similarity">
    <text evidence="1">Belongs to the uroporphyrinogen decarboxylase family.</text>
</comment>
<protein>
    <recommendedName>
        <fullName evidence="1">Uroporphyrinogen decarboxylase</fullName>
        <shortName evidence="1">UPD</shortName>
        <shortName evidence="1">URO-D</shortName>
        <ecNumber evidence="1">4.1.1.37</ecNumber>
    </recommendedName>
</protein>
<keyword id="KW-0963">Cytoplasm</keyword>
<keyword id="KW-0210">Decarboxylase</keyword>
<keyword id="KW-0456">Lyase</keyword>
<keyword id="KW-0627">Porphyrin biosynthesis</keyword>
<keyword id="KW-1185">Reference proteome</keyword>
<reference key="1">
    <citation type="submission" date="2006-02" db="EMBL/GenBank/DDBJ databases">
        <title>Complete sequence of chromosome of Rhodoferax ferrireducens DSM 15236.</title>
        <authorList>
            <person name="Copeland A."/>
            <person name="Lucas S."/>
            <person name="Lapidus A."/>
            <person name="Barry K."/>
            <person name="Detter J.C."/>
            <person name="Glavina del Rio T."/>
            <person name="Hammon N."/>
            <person name="Israni S."/>
            <person name="Pitluck S."/>
            <person name="Brettin T."/>
            <person name="Bruce D."/>
            <person name="Han C."/>
            <person name="Tapia R."/>
            <person name="Gilna P."/>
            <person name="Kiss H."/>
            <person name="Schmutz J."/>
            <person name="Larimer F."/>
            <person name="Land M."/>
            <person name="Kyrpides N."/>
            <person name="Ivanova N."/>
            <person name="Richardson P."/>
        </authorList>
    </citation>
    <scope>NUCLEOTIDE SEQUENCE [LARGE SCALE GENOMIC DNA]</scope>
    <source>
        <strain>ATCC BAA-621 / DSM 15236 / T118</strain>
    </source>
</reference>
<accession>Q220I2</accession>
<proteinExistence type="inferred from homology"/>
<evidence type="ECO:0000255" key="1">
    <source>
        <dbReference type="HAMAP-Rule" id="MF_00218"/>
    </source>
</evidence>
<sequence length="369" mass="40052">MNTSTNSSAFAPLKNDTFLRACLRQATDYTPIWMMRQAGRFLPEYRATRAKAGSFMGLATNTDYATEVTLQPVERFPIDAAILFSDILTVPDAMGLGLSFALGEGPKFAHPVQDEAAVAKLAVPDMDKLRYVFDAVTSIRKALNGKVPLIGFSGSPWTLGCYMVEGAGSDDYRLVKTMLYSRPDLMHRILQINADSVAQYLNAQIEAGAQAVMIFDSWGGVLADGAFQEFSLAYTARVLAQLKREHNGARIPRIVFTKGGGMWLKEMGLLDCDVLGLDWTVNLAKARAIVGDSKALQGNMDPNVLFASPAQIAAEATRVLDSFGTPYAGEGTGPTHIFNLGHGISQHTPPEHVAALVQAVHEHSRKMRA</sequence>
<organism>
    <name type="scientific">Albidiferax ferrireducens (strain ATCC BAA-621 / DSM 15236 / T118)</name>
    <name type="common">Rhodoferax ferrireducens</name>
    <dbReference type="NCBI Taxonomy" id="338969"/>
    <lineage>
        <taxon>Bacteria</taxon>
        <taxon>Pseudomonadati</taxon>
        <taxon>Pseudomonadota</taxon>
        <taxon>Betaproteobacteria</taxon>
        <taxon>Burkholderiales</taxon>
        <taxon>Comamonadaceae</taxon>
        <taxon>Rhodoferax</taxon>
    </lineage>
</organism>
<gene>
    <name evidence="1" type="primary">hemE</name>
    <name type="ordered locus">Rfer_0821</name>
</gene>
<dbReference type="EC" id="4.1.1.37" evidence="1"/>
<dbReference type="EMBL" id="CP000267">
    <property type="protein sequence ID" value="ABD68571.1"/>
    <property type="molecule type" value="Genomic_DNA"/>
</dbReference>
<dbReference type="RefSeq" id="WP_011463144.1">
    <property type="nucleotide sequence ID" value="NC_007908.1"/>
</dbReference>
<dbReference type="SMR" id="Q220I2"/>
<dbReference type="STRING" id="338969.Rfer_0821"/>
<dbReference type="KEGG" id="rfr:Rfer_0821"/>
<dbReference type="eggNOG" id="COG0407">
    <property type="taxonomic scope" value="Bacteria"/>
</dbReference>
<dbReference type="HOGENOM" id="CLU_040933_0_0_4"/>
<dbReference type="OrthoDB" id="9806656at2"/>
<dbReference type="UniPathway" id="UPA00251">
    <property type="reaction ID" value="UER00321"/>
</dbReference>
<dbReference type="Proteomes" id="UP000008332">
    <property type="component" value="Chromosome"/>
</dbReference>
<dbReference type="GO" id="GO:0005829">
    <property type="term" value="C:cytosol"/>
    <property type="evidence" value="ECO:0007669"/>
    <property type="project" value="TreeGrafter"/>
</dbReference>
<dbReference type="GO" id="GO:0004853">
    <property type="term" value="F:uroporphyrinogen decarboxylase activity"/>
    <property type="evidence" value="ECO:0007669"/>
    <property type="project" value="UniProtKB-UniRule"/>
</dbReference>
<dbReference type="GO" id="GO:0019353">
    <property type="term" value="P:protoporphyrinogen IX biosynthetic process from glutamate"/>
    <property type="evidence" value="ECO:0007669"/>
    <property type="project" value="TreeGrafter"/>
</dbReference>
<dbReference type="CDD" id="cd00717">
    <property type="entry name" value="URO-D"/>
    <property type="match status" value="1"/>
</dbReference>
<dbReference type="FunFam" id="3.20.20.210:FF:000001">
    <property type="entry name" value="Uroporphyrinogen decarboxylase"/>
    <property type="match status" value="1"/>
</dbReference>
<dbReference type="Gene3D" id="3.20.20.210">
    <property type="match status" value="1"/>
</dbReference>
<dbReference type="HAMAP" id="MF_00218">
    <property type="entry name" value="URO_D"/>
    <property type="match status" value="1"/>
</dbReference>
<dbReference type="InterPro" id="IPR038071">
    <property type="entry name" value="UROD/MetE-like_sf"/>
</dbReference>
<dbReference type="InterPro" id="IPR006361">
    <property type="entry name" value="Uroporphyrinogen_deCO2ase_HemE"/>
</dbReference>
<dbReference type="InterPro" id="IPR000257">
    <property type="entry name" value="Uroporphyrinogen_deCOase"/>
</dbReference>
<dbReference type="NCBIfam" id="TIGR01464">
    <property type="entry name" value="hemE"/>
    <property type="match status" value="1"/>
</dbReference>
<dbReference type="PANTHER" id="PTHR21091">
    <property type="entry name" value="METHYLTETRAHYDROFOLATE:HOMOCYSTEINE METHYLTRANSFERASE RELATED"/>
    <property type="match status" value="1"/>
</dbReference>
<dbReference type="PANTHER" id="PTHR21091:SF169">
    <property type="entry name" value="UROPORPHYRINOGEN DECARBOXYLASE"/>
    <property type="match status" value="1"/>
</dbReference>
<dbReference type="Pfam" id="PF01208">
    <property type="entry name" value="URO-D"/>
    <property type="match status" value="1"/>
</dbReference>
<dbReference type="SUPFAM" id="SSF51726">
    <property type="entry name" value="UROD/MetE-like"/>
    <property type="match status" value="1"/>
</dbReference>
<dbReference type="PROSITE" id="PS00906">
    <property type="entry name" value="UROD_1"/>
    <property type="match status" value="1"/>
</dbReference>
<dbReference type="PROSITE" id="PS00907">
    <property type="entry name" value="UROD_2"/>
    <property type="match status" value="1"/>
</dbReference>
<name>DCUP_ALBFT</name>
<feature type="chain" id="PRO_0000325682" description="Uroporphyrinogen decarboxylase">
    <location>
        <begin position="1"/>
        <end position="369"/>
    </location>
</feature>
<feature type="binding site" evidence="1">
    <location>
        <begin position="36"/>
        <end position="40"/>
    </location>
    <ligand>
        <name>substrate</name>
    </ligand>
</feature>
<feature type="binding site" evidence="1">
    <location>
        <position position="86"/>
    </location>
    <ligand>
        <name>substrate</name>
    </ligand>
</feature>
<feature type="binding site" evidence="1">
    <location>
        <position position="162"/>
    </location>
    <ligand>
        <name>substrate</name>
    </ligand>
</feature>
<feature type="binding site" evidence="1">
    <location>
        <position position="217"/>
    </location>
    <ligand>
        <name>substrate</name>
    </ligand>
</feature>
<feature type="binding site" evidence="1">
    <location>
        <position position="342"/>
    </location>
    <ligand>
        <name>substrate</name>
    </ligand>
</feature>
<feature type="site" description="Transition state stabilizer" evidence="1">
    <location>
        <position position="86"/>
    </location>
</feature>